<proteinExistence type="inferred from homology"/>
<gene>
    <name type="primary">rps3</name>
</gene>
<geneLocation type="chloroplast"/>
<accession>Q6END5</accession>
<comment type="subunit">
    <text evidence="1">Part of the 30S ribosomal subunit.</text>
</comment>
<comment type="subcellular location">
    <subcellularLocation>
        <location>Plastid</location>
        <location>Chloroplast</location>
    </subcellularLocation>
</comment>
<comment type="similarity">
    <text evidence="2">Belongs to the universal ribosomal protein uS3 family.</text>
</comment>
<keyword id="KW-0150">Chloroplast</keyword>
<keyword id="KW-0934">Plastid</keyword>
<keyword id="KW-1185">Reference proteome</keyword>
<keyword id="KW-0687">Ribonucleoprotein</keyword>
<keyword id="KW-0689">Ribosomal protein</keyword>
<keyword id="KW-0694">RNA-binding</keyword>
<keyword id="KW-0699">rRNA-binding</keyword>
<name>RR3_ORYNI</name>
<reference key="1">
    <citation type="journal article" date="2004" name="Gene">
        <title>The complete nucleotide sequence of wild rice (Oryza nivara) chloroplast genome: first genome wide comparative sequence analysis of wild and cultivated rice.</title>
        <authorList>
            <person name="Masood M.S."/>
            <person name="Nishikawa T."/>
            <person name="Fukuoka S."/>
            <person name="Njenga P.K."/>
            <person name="Tsudzuki T."/>
            <person name="Kadowaki K."/>
        </authorList>
    </citation>
    <scope>NUCLEOTIDE SEQUENCE [LARGE SCALE GENOMIC DNA]</scope>
    <source>
        <strain evidence="3">cv. SL10</strain>
    </source>
</reference>
<feature type="chain" id="PRO_0000130294" description="Small ribosomal subunit protein uS3c">
    <location>
        <begin position="1"/>
        <end position="239"/>
    </location>
</feature>
<feature type="domain" description="KH type-2">
    <location>
        <begin position="43"/>
        <end position="139"/>
    </location>
</feature>
<dbReference type="EMBL" id="AP006728">
    <property type="protein sequence ID" value="BAD26817.1"/>
    <property type="molecule type" value="Genomic_DNA"/>
</dbReference>
<dbReference type="RefSeq" id="YP_052788.1">
    <property type="nucleotide sequence ID" value="NC_005973.1"/>
</dbReference>
<dbReference type="SMR" id="Q6END5"/>
<dbReference type="STRING" id="4536.Q6END5"/>
<dbReference type="GeneID" id="2885955"/>
<dbReference type="eggNOG" id="ENOG502R7WR">
    <property type="taxonomic scope" value="Eukaryota"/>
</dbReference>
<dbReference type="Proteomes" id="UP000006591">
    <property type="component" value="Chloroplast"/>
</dbReference>
<dbReference type="GO" id="GO:0009507">
    <property type="term" value="C:chloroplast"/>
    <property type="evidence" value="ECO:0007669"/>
    <property type="project" value="UniProtKB-SubCell"/>
</dbReference>
<dbReference type="GO" id="GO:0022627">
    <property type="term" value="C:cytosolic small ribosomal subunit"/>
    <property type="evidence" value="ECO:0007669"/>
    <property type="project" value="TreeGrafter"/>
</dbReference>
<dbReference type="GO" id="GO:0009536">
    <property type="term" value="C:plastid"/>
    <property type="evidence" value="ECO:0000305"/>
    <property type="project" value="Gramene"/>
</dbReference>
<dbReference type="GO" id="GO:0019843">
    <property type="term" value="F:rRNA binding"/>
    <property type="evidence" value="ECO:0007669"/>
    <property type="project" value="UniProtKB-KW"/>
</dbReference>
<dbReference type="GO" id="GO:0003735">
    <property type="term" value="F:structural constituent of ribosome"/>
    <property type="evidence" value="ECO:0007669"/>
    <property type="project" value="InterPro"/>
</dbReference>
<dbReference type="GO" id="GO:0006412">
    <property type="term" value="P:translation"/>
    <property type="evidence" value="ECO:0007669"/>
    <property type="project" value="UniProtKB-UniRule"/>
</dbReference>
<dbReference type="CDD" id="cd02412">
    <property type="entry name" value="KH-II_30S_S3"/>
    <property type="match status" value="1"/>
</dbReference>
<dbReference type="FunFam" id="3.30.1140.32:FF:000003">
    <property type="entry name" value="30S ribosomal protein S3, chloroplastic"/>
    <property type="match status" value="1"/>
</dbReference>
<dbReference type="FunFam" id="3.30.300.20:FF:000008">
    <property type="entry name" value="30S ribosomal protein S3, chloroplastic"/>
    <property type="match status" value="1"/>
</dbReference>
<dbReference type="Gene3D" id="3.30.300.20">
    <property type="match status" value="1"/>
</dbReference>
<dbReference type="Gene3D" id="3.30.1140.32">
    <property type="entry name" value="Ribosomal protein S3, C-terminal domain"/>
    <property type="match status" value="1"/>
</dbReference>
<dbReference type="HAMAP" id="MF_01309_B">
    <property type="entry name" value="Ribosomal_uS3_B"/>
    <property type="match status" value="1"/>
</dbReference>
<dbReference type="InterPro" id="IPR015946">
    <property type="entry name" value="KH_dom-like_a/b"/>
</dbReference>
<dbReference type="InterPro" id="IPR009019">
    <property type="entry name" value="KH_sf_prok-type"/>
</dbReference>
<dbReference type="InterPro" id="IPR036419">
    <property type="entry name" value="Ribosomal_S3_C_sf"/>
</dbReference>
<dbReference type="InterPro" id="IPR005704">
    <property type="entry name" value="Ribosomal_uS3_bac-typ"/>
</dbReference>
<dbReference type="InterPro" id="IPR001351">
    <property type="entry name" value="Ribosomal_uS3_C"/>
</dbReference>
<dbReference type="InterPro" id="IPR018280">
    <property type="entry name" value="Ribosomal_uS3_CS"/>
</dbReference>
<dbReference type="NCBIfam" id="TIGR01009">
    <property type="entry name" value="rpsC_bact"/>
    <property type="match status" value="1"/>
</dbReference>
<dbReference type="PANTHER" id="PTHR11760">
    <property type="entry name" value="30S/40S RIBOSOMAL PROTEIN S3"/>
    <property type="match status" value="1"/>
</dbReference>
<dbReference type="PANTHER" id="PTHR11760:SF42">
    <property type="entry name" value="SMALL RIBOSOMAL SUBUNIT PROTEIN US3C"/>
    <property type="match status" value="1"/>
</dbReference>
<dbReference type="Pfam" id="PF00189">
    <property type="entry name" value="Ribosomal_S3_C"/>
    <property type="match status" value="1"/>
</dbReference>
<dbReference type="SUPFAM" id="SSF54814">
    <property type="entry name" value="Prokaryotic type KH domain (KH-domain type II)"/>
    <property type="match status" value="1"/>
</dbReference>
<dbReference type="SUPFAM" id="SSF54821">
    <property type="entry name" value="Ribosomal protein S3 C-terminal domain"/>
    <property type="match status" value="1"/>
</dbReference>
<dbReference type="PROSITE" id="PS00548">
    <property type="entry name" value="RIBOSOMAL_S3"/>
    <property type="match status" value="1"/>
</dbReference>
<sequence length="239" mass="27518">MGQKINPLGFRLGTTQNHHSFWFAQPKNYSEGLQEDKKIRNCIKNYIQKNRKKGSNRKIEADSSFEVITHNKKMDSGSSSEVITHIEIQKEIDTIHVIIHIGFPNLLKKKGAIEELEKDLQKEVNSVNQRLNIGIEKVKEPYRQPNILAEYIAFQLKNRVSFRKAMKKAIELTKKTDIKGVKVKIAGRLAGKEIARAECIKKGRLPLQTIRAKIDYCCYPIRTIYGVLGVKIWIFVDEE</sequence>
<protein>
    <recommendedName>
        <fullName evidence="2">Small ribosomal subunit protein uS3c</fullName>
    </recommendedName>
    <alternativeName>
        <fullName>30S ribosomal protein S3, chloroplastic</fullName>
    </alternativeName>
</protein>
<organism>
    <name type="scientific">Oryza nivara</name>
    <name type="common">Indian wild rice</name>
    <name type="synonym">Oryza sativa f. spontanea</name>
    <dbReference type="NCBI Taxonomy" id="4536"/>
    <lineage>
        <taxon>Eukaryota</taxon>
        <taxon>Viridiplantae</taxon>
        <taxon>Streptophyta</taxon>
        <taxon>Embryophyta</taxon>
        <taxon>Tracheophyta</taxon>
        <taxon>Spermatophyta</taxon>
        <taxon>Magnoliopsida</taxon>
        <taxon>Liliopsida</taxon>
        <taxon>Poales</taxon>
        <taxon>Poaceae</taxon>
        <taxon>BOP clade</taxon>
        <taxon>Oryzoideae</taxon>
        <taxon>Oryzeae</taxon>
        <taxon>Oryzinae</taxon>
        <taxon>Oryza</taxon>
    </lineage>
</organism>
<evidence type="ECO:0000250" key="1"/>
<evidence type="ECO:0000305" key="2"/>
<evidence type="ECO:0000312" key="3">
    <source>
        <dbReference type="Proteomes" id="UP000006591"/>
    </source>
</evidence>